<proteinExistence type="inferred from homology"/>
<gene>
    <name evidence="1" type="primary">dnaJ</name>
</gene>
<protein>
    <recommendedName>
        <fullName evidence="1">Chaperone protein DnaJ</fullName>
    </recommendedName>
</protein>
<accession>P0C0B5</accession>
<accession>Q99YC9</accession>
<accession>Q9FAZ9</accession>
<sequence length="378" mass="40449">MNNTEYYDRLGVSKDASQDDIKKAYRKMSKKYHPDINKEAGAEQKYKDVQEAYETLSDSQKRAAYDQYGAAGAQGGFGGGAGGFGGFDGGGFGGFEDIFSSFFGGGGSRNPNAPRQGDDLQYRVNLSFEEAVFGVEKEVSYNREATCGTCLGSGAKPGTAPVTCRKCHGSGVMTIDTQTPLGMMRRQVTCDICHGSGKEIKEPCQTCHGTGHEKQAHKVSVKIPAGVETGQQIRLQGQGEAGFNGGPYGDLFVILNVLPSKQFERNGSTIYYSLDISFTQAALGDTVEIPTVHGDVELAIPAGTQTGKTFRLKGKGAPKLRGGGQGDQHVTVNIVTPTKLNDAQREALQAFAEASGEKMLHPKKKGFFDKVKDALEDI</sequence>
<keyword id="KW-0143">Chaperone</keyword>
<keyword id="KW-0963">Cytoplasm</keyword>
<keyword id="KW-0235">DNA replication</keyword>
<keyword id="KW-0479">Metal-binding</keyword>
<keyword id="KW-0677">Repeat</keyword>
<keyword id="KW-0346">Stress response</keyword>
<keyword id="KW-0862">Zinc</keyword>
<keyword id="KW-0863">Zinc-finger</keyword>
<comment type="function">
    <text evidence="1">Participates actively in the response to hyperosmotic and heat shock by preventing the aggregation of stress-denatured proteins and by disaggregating proteins, also in an autonomous, DnaK-independent fashion. Unfolded proteins bind initially to DnaJ; upon interaction with the DnaJ-bound protein, DnaK hydrolyzes its bound ATP, resulting in the formation of a stable complex. GrpE releases ADP from DnaK; ATP binding to DnaK triggers the release of the substrate protein, thus completing the reaction cycle. Several rounds of ATP-dependent interactions between DnaJ, DnaK and GrpE are required for fully efficient folding. Also involved, together with DnaK and GrpE, in the DNA replication of plasmids through activation of initiation proteins.</text>
</comment>
<comment type="cofactor">
    <cofactor evidence="1">
        <name>Zn(2+)</name>
        <dbReference type="ChEBI" id="CHEBI:29105"/>
    </cofactor>
    <text evidence="1">Binds 2 Zn(2+) ions per monomer.</text>
</comment>
<comment type="subunit">
    <text evidence="1">Homodimer.</text>
</comment>
<comment type="subcellular location">
    <subcellularLocation>
        <location evidence="1">Cytoplasm</location>
    </subcellularLocation>
</comment>
<comment type="domain">
    <text evidence="1">The J domain is necessary and sufficient to stimulate DnaK ATPase activity. Zinc center 1 plays an important role in the autonomous, DnaK-independent chaperone activity of DnaJ. Zinc center 2 is essential for interaction with DnaK and for DnaJ activity.</text>
</comment>
<comment type="similarity">
    <text evidence="1">Belongs to the DnaJ family.</text>
</comment>
<name>DNAJ_STRPY</name>
<reference key="1">
    <citation type="submission" date="1999-08" db="EMBL/GenBank/DDBJ databases">
        <title>A novel cloning method used arbitrarily primed PCR.</title>
        <authorList>
            <person name="Hong K."/>
        </authorList>
    </citation>
    <scope>NUCLEOTIDE SEQUENCE [GENOMIC DNA]</scope>
    <source>
        <strain>Sv / Serotype M23</strain>
    </source>
</reference>
<feature type="chain" id="PRO_0000070903" description="Chaperone protein DnaJ">
    <location>
        <begin position="1"/>
        <end position="378"/>
    </location>
</feature>
<feature type="domain" description="J" evidence="1">
    <location>
        <begin position="5"/>
        <end position="69"/>
    </location>
</feature>
<feature type="repeat" description="CXXCXGXG motif">
    <location>
        <begin position="147"/>
        <end position="154"/>
    </location>
</feature>
<feature type="repeat" description="CXXCXGXG motif">
    <location>
        <begin position="164"/>
        <end position="171"/>
    </location>
</feature>
<feature type="repeat" description="CXXCXGXG motif">
    <location>
        <begin position="190"/>
        <end position="197"/>
    </location>
</feature>
<feature type="repeat" description="CXXCXGXG motif">
    <location>
        <begin position="204"/>
        <end position="211"/>
    </location>
</feature>
<feature type="zinc finger region" description="CR-type" evidence="1">
    <location>
        <begin position="134"/>
        <end position="216"/>
    </location>
</feature>
<feature type="binding site" evidence="1">
    <location>
        <position position="147"/>
    </location>
    <ligand>
        <name>Zn(2+)</name>
        <dbReference type="ChEBI" id="CHEBI:29105"/>
        <label>1</label>
    </ligand>
</feature>
<feature type="binding site" evidence="1">
    <location>
        <position position="150"/>
    </location>
    <ligand>
        <name>Zn(2+)</name>
        <dbReference type="ChEBI" id="CHEBI:29105"/>
        <label>1</label>
    </ligand>
</feature>
<feature type="binding site" evidence="1">
    <location>
        <position position="164"/>
    </location>
    <ligand>
        <name>Zn(2+)</name>
        <dbReference type="ChEBI" id="CHEBI:29105"/>
        <label>2</label>
    </ligand>
</feature>
<feature type="binding site" evidence="1">
    <location>
        <position position="167"/>
    </location>
    <ligand>
        <name>Zn(2+)</name>
        <dbReference type="ChEBI" id="CHEBI:29105"/>
        <label>2</label>
    </ligand>
</feature>
<feature type="binding site" evidence="1">
    <location>
        <position position="190"/>
    </location>
    <ligand>
        <name>Zn(2+)</name>
        <dbReference type="ChEBI" id="CHEBI:29105"/>
        <label>2</label>
    </ligand>
</feature>
<feature type="binding site" evidence="1">
    <location>
        <position position="193"/>
    </location>
    <ligand>
        <name>Zn(2+)</name>
        <dbReference type="ChEBI" id="CHEBI:29105"/>
        <label>2</label>
    </ligand>
</feature>
<feature type="binding site" evidence="1">
    <location>
        <position position="204"/>
    </location>
    <ligand>
        <name>Zn(2+)</name>
        <dbReference type="ChEBI" id="CHEBI:29105"/>
        <label>1</label>
    </ligand>
</feature>
<feature type="binding site" evidence="1">
    <location>
        <position position="207"/>
    </location>
    <ligand>
        <name>Zn(2+)</name>
        <dbReference type="ChEBI" id="CHEBI:29105"/>
        <label>1</label>
    </ligand>
</feature>
<dbReference type="EMBL" id="AB030809">
    <property type="protein sequence ID" value="BAB16032.1"/>
    <property type="molecule type" value="Genomic_DNA"/>
</dbReference>
<dbReference type="RefSeq" id="WP_038433550.1">
    <property type="nucleotide sequence ID" value="NZ_CAAIFA010000002.1"/>
</dbReference>
<dbReference type="SMR" id="P0C0B5"/>
<dbReference type="STRING" id="1314.SD89_02050"/>
<dbReference type="eggNOG" id="COG0484">
    <property type="taxonomic scope" value="Bacteria"/>
</dbReference>
<dbReference type="GO" id="GO:0005737">
    <property type="term" value="C:cytoplasm"/>
    <property type="evidence" value="ECO:0007669"/>
    <property type="project" value="UniProtKB-SubCell"/>
</dbReference>
<dbReference type="GO" id="GO:0005524">
    <property type="term" value="F:ATP binding"/>
    <property type="evidence" value="ECO:0007669"/>
    <property type="project" value="InterPro"/>
</dbReference>
<dbReference type="GO" id="GO:0031072">
    <property type="term" value="F:heat shock protein binding"/>
    <property type="evidence" value="ECO:0007669"/>
    <property type="project" value="InterPro"/>
</dbReference>
<dbReference type="GO" id="GO:0051082">
    <property type="term" value="F:unfolded protein binding"/>
    <property type="evidence" value="ECO:0007669"/>
    <property type="project" value="UniProtKB-UniRule"/>
</dbReference>
<dbReference type="GO" id="GO:0008270">
    <property type="term" value="F:zinc ion binding"/>
    <property type="evidence" value="ECO:0007669"/>
    <property type="project" value="UniProtKB-UniRule"/>
</dbReference>
<dbReference type="GO" id="GO:0051085">
    <property type="term" value="P:chaperone cofactor-dependent protein refolding"/>
    <property type="evidence" value="ECO:0007669"/>
    <property type="project" value="TreeGrafter"/>
</dbReference>
<dbReference type="GO" id="GO:0006260">
    <property type="term" value="P:DNA replication"/>
    <property type="evidence" value="ECO:0007669"/>
    <property type="project" value="UniProtKB-KW"/>
</dbReference>
<dbReference type="GO" id="GO:0042026">
    <property type="term" value="P:protein refolding"/>
    <property type="evidence" value="ECO:0007669"/>
    <property type="project" value="TreeGrafter"/>
</dbReference>
<dbReference type="GO" id="GO:0009408">
    <property type="term" value="P:response to heat"/>
    <property type="evidence" value="ECO:0007669"/>
    <property type="project" value="InterPro"/>
</dbReference>
<dbReference type="CDD" id="cd06257">
    <property type="entry name" value="DnaJ"/>
    <property type="match status" value="1"/>
</dbReference>
<dbReference type="CDD" id="cd10747">
    <property type="entry name" value="DnaJ_C"/>
    <property type="match status" value="1"/>
</dbReference>
<dbReference type="CDD" id="cd10719">
    <property type="entry name" value="DnaJ_zf"/>
    <property type="match status" value="1"/>
</dbReference>
<dbReference type="FunFam" id="1.10.287.110:FF:000031">
    <property type="entry name" value="Molecular chaperone DnaJ"/>
    <property type="match status" value="1"/>
</dbReference>
<dbReference type="FunFam" id="2.10.230.10:FF:000002">
    <property type="entry name" value="Molecular chaperone DnaJ"/>
    <property type="match status" value="1"/>
</dbReference>
<dbReference type="FunFam" id="2.60.260.20:FF:000004">
    <property type="entry name" value="Molecular chaperone DnaJ"/>
    <property type="match status" value="1"/>
</dbReference>
<dbReference type="Gene3D" id="1.10.287.110">
    <property type="entry name" value="DnaJ domain"/>
    <property type="match status" value="1"/>
</dbReference>
<dbReference type="Gene3D" id="2.10.230.10">
    <property type="entry name" value="Heat shock protein DnaJ, cysteine-rich domain"/>
    <property type="match status" value="1"/>
</dbReference>
<dbReference type="Gene3D" id="2.60.260.20">
    <property type="entry name" value="Urease metallochaperone UreE, N-terminal domain"/>
    <property type="match status" value="2"/>
</dbReference>
<dbReference type="HAMAP" id="MF_01152">
    <property type="entry name" value="DnaJ"/>
    <property type="match status" value="1"/>
</dbReference>
<dbReference type="InterPro" id="IPR012724">
    <property type="entry name" value="DnaJ"/>
</dbReference>
<dbReference type="InterPro" id="IPR002939">
    <property type="entry name" value="DnaJ_C"/>
</dbReference>
<dbReference type="InterPro" id="IPR001623">
    <property type="entry name" value="DnaJ_domain"/>
</dbReference>
<dbReference type="InterPro" id="IPR018253">
    <property type="entry name" value="DnaJ_domain_CS"/>
</dbReference>
<dbReference type="InterPro" id="IPR008971">
    <property type="entry name" value="HSP40/DnaJ_pept-bd"/>
</dbReference>
<dbReference type="InterPro" id="IPR001305">
    <property type="entry name" value="HSP_DnaJ_Cys-rich_dom"/>
</dbReference>
<dbReference type="InterPro" id="IPR036410">
    <property type="entry name" value="HSP_DnaJ_Cys-rich_dom_sf"/>
</dbReference>
<dbReference type="InterPro" id="IPR036869">
    <property type="entry name" value="J_dom_sf"/>
</dbReference>
<dbReference type="NCBIfam" id="TIGR02349">
    <property type="entry name" value="DnaJ_bact"/>
    <property type="match status" value="1"/>
</dbReference>
<dbReference type="NCBIfam" id="NF008035">
    <property type="entry name" value="PRK10767.1"/>
    <property type="match status" value="1"/>
</dbReference>
<dbReference type="NCBIfam" id="NF010869">
    <property type="entry name" value="PRK14276.1"/>
    <property type="match status" value="1"/>
</dbReference>
<dbReference type="PANTHER" id="PTHR43096:SF48">
    <property type="entry name" value="CHAPERONE PROTEIN DNAJ"/>
    <property type="match status" value="1"/>
</dbReference>
<dbReference type="PANTHER" id="PTHR43096">
    <property type="entry name" value="DNAJ HOMOLOG 1, MITOCHONDRIAL-RELATED"/>
    <property type="match status" value="1"/>
</dbReference>
<dbReference type="Pfam" id="PF00226">
    <property type="entry name" value="DnaJ"/>
    <property type="match status" value="1"/>
</dbReference>
<dbReference type="Pfam" id="PF01556">
    <property type="entry name" value="DnaJ_C"/>
    <property type="match status" value="1"/>
</dbReference>
<dbReference type="Pfam" id="PF00684">
    <property type="entry name" value="DnaJ_CXXCXGXG"/>
    <property type="match status" value="1"/>
</dbReference>
<dbReference type="PRINTS" id="PR00625">
    <property type="entry name" value="JDOMAIN"/>
</dbReference>
<dbReference type="SMART" id="SM00271">
    <property type="entry name" value="DnaJ"/>
    <property type="match status" value="1"/>
</dbReference>
<dbReference type="SUPFAM" id="SSF46565">
    <property type="entry name" value="Chaperone J-domain"/>
    <property type="match status" value="1"/>
</dbReference>
<dbReference type="SUPFAM" id="SSF57938">
    <property type="entry name" value="DnaJ/Hsp40 cysteine-rich domain"/>
    <property type="match status" value="1"/>
</dbReference>
<dbReference type="SUPFAM" id="SSF49493">
    <property type="entry name" value="HSP40/DnaJ peptide-binding domain"/>
    <property type="match status" value="2"/>
</dbReference>
<dbReference type="PROSITE" id="PS00636">
    <property type="entry name" value="DNAJ_1"/>
    <property type="match status" value="1"/>
</dbReference>
<dbReference type="PROSITE" id="PS50076">
    <property type="entry name" value="DNAJ_2"/>
    <property type="match status" value="1"/>
</dbReference>
<dbReference type="PROSITE" id="PS51188">
    <property type="entry name" value="ZF_CR"/>
    <property type="match status" value="1"/>
</dbReference>
<evidence type="ECO:0000255" key="1">
    <source>
        <dbReference type="HAMAP-Rule" id="MF_01152"/>
    </source>
</evidence>
<organism>
    <name type="scientific">Streptococcus pyogenes</name>
    <dbReference type="NCBI Taxonomy" id="1314"/>
    <lineage>
        <taxon>Bacteria</taxon>
        <taxon>Bacillati</taxon>
        <taxon>Bacillota</taxon>
        <taxon>Bacilli</taxon>
        <taxon>Lactobacillales</taxon>
        <taxon>Streptococcaceae</taxon>
        <taxon>Streptococcus</taxon>
    </lineage>
</organism>